<name>RBFA_BIFLO</name>
<protein>
    <recommendedName>
        <fullName evidence="1">Ribosome-binding factor A</fullName>
    </recommendedName>
</protein>
<proteinExistence type="inferred from homology"/>
<comment type="function">
    <text evidence="1">One of several proteins that assist in the late maturation steps of the functional core of the 30S ribosomal subunit. Associates with free 30S ribosomal subunits (but not with 30S subunits that are part of 70S ribosomes or polysomes). Required for efficient processing of 16S rRNA. May interact with the 5'-terminal helix region of 16S rRNA.</text>
</comment>
<comment type="subunit">
    <text evidence="1">Monomer. Binds 30S ribosomal subunits, but not 50S ribosomal subunits or 70S ribosomes.</text>
</comment>
<comment type="subcellular location">
    <subcellularLocation>
        <location evidence="1">Cytoplasm</location>
    </subcellularLocation>
</comment>
<comment type="similarity">
    <text evidence="1">Belongs to the RbfA family.</text>
</comment>
<keyword id="KW-0963">Cytoplasm</keyword>
<keyword id="KW-1185">Reference proteome</keyword>
<keyword id="KW-0690">Ribosome biogenesis</keyword>
<evidence type="ECO:0000255" key="1">
    <source>
        <dbReference type="HAMAP-Rule" id="MF_00003"/>
    </source>
</evidence>
<evidence type="ECO:0000256" key="2">
    <source>
        <dbReference type="SAM" id="MobiDB-lite"/>
    </source>
</evidence>
<reference key="1">
    <citation type="journal article" date="2002" name="Proc. Natl. Acad. Sci. U.S.A.">
        <title>The genome sequence of Bifidobacterium longum reflects its adaptation to the human gastrointestinal tract.</title>
        <authorList>
            <person name="Schell M.A."/>
            <person name="Karmirantzou M."/>
            <person name="Snel B."/>
            <person name="Vilanova D."/>
            <person name="Berger B."/>
            <person name="Pessi G."/>
            <person name="Zwahlen M.-C."/>
            <person name="Desiere F."/>
            <person name="Bork P."/>
            <person name="Delley M."/>
            <person name="Pridmore R.D."/>
            <person name="Arigoni F."/>
        </authorList>
    </citation>
    <scope>NUCLEOTIDE SEQUENCE [LARGE SCALE GENOMIC DNA]</scope>
    <source>
        <strain>NCC 2705</strain>
    </source>
</reference>
<gene>
    <name evidence="1" type="primary">rbfA</name>
    <name type="ordered locus">BL1617</name>
</gene>
<accession>Q8G3Y4</accession>
<dbReference type="EMBL" id="AE014295">
    <property type="protein sequence ID" value="AAN25405.1"/>
    <property type="molecule type" value="Genomic_DNA"/>
</dbReference>
<dbReference type="RefSeq" id="NP_696769.1">
    <property type="nucleotide sequence ID" value="NC_004307.2"/>
</dbReference>
<dbReference type="RefSeq" id="WP_007052308.1">
    <property type="nucleotide sequence ID" value="NC_004307.2"/>
</dbReference>
<dbReference type="SMR" id="Q8G3Y4"/>
<dbReference type="STRING" id="206672.BL1617"/>
<dbReference type="EnsemblBacteria" id="AAN25405">
    <property type="protein sequence ID" value="AAN25405"/>
    <property type="gene ID" value="BL1617"/>
</dbReference>
<dbReference type="GeneID" id="69578860"/>
<dbReference type="KEGG" id="blo:BL1617"/>
<dbReference type="PATRIC" id="fig|206672.9.peg.1672"/>
<dbReference type="HOGENOM" id="CLU_089475_0_0_11"/>
<dbReference type="OrthoDB" id="307788at2"/>
<dbReference type="PhylomeDB" id="Q8G3Y4"/>
<dbReference type="Proteomes" id="UP000000439">
    <property type="component" value="Chromosome"/>
</dbReference>
<dbReference type="GO" id="GO:0005829">
    <property type="term" value="C:cytosol"/>
    <property type="evidence" value="ECO:0007669"/>
    <property type="project" value="TreeGrafter"/>
</dbReference>
<dbReference type="GO" id="GO:0043024">
    <property type="term" value="F:ribosomal small subunit binding"/>
    <property type="evidence" value="ECO:0007669"/>
    <property type="project" value="TreeGrafter"/>
</dbReference>
<dbReference type="GO" id="GO:0030490">
    <property type="term" value="P:maturation of SSU-rRNA"/>
    <property type="evidence" value="ECO:0007669"/>
    <property type="project" value="UniProtKB-UniRule"/>
</dbReference>
<dbReference type="Gene3D" id="3.30.300.20">
    <property type="match status" value="1"/>
</dbReference>
<dbReference type="HAMAP" id="MF_00003">
    <property type="entry name" value="RbfA"/>
    <property type="match status" value="1"/>
</dbReference>
<dbReference type="InterPro" id="IPR015946">
    <property type="entry name" value="KH_dom-like_a/b"/>
</dbReference>
<dbReference type="InterPro" id="IPR000238">
    <property type="entry name" value="RbfA"/>
</dbReference>
<dbReference type="InterPro" id="IPR023799">
    <property type="entry name" value="RbfA_dom_sf"/>
</dbReference>
<dbReference type="InterPro" id="IPR020053">
    <property type="entry name" value="Ribosome-bd_factorA_CS"/>
</dbReference>
<dbReference type="NCBIfam" id="TIGR00082">
    <property type="entry name" value="rbfA"/>
    <property type="match status" value="1"/>
</dbReference>
<dbReference type="PANTHER" id="PTHR33515">
    <property type="entry name" value="RIBOSOME-BINDING FACTOR A, CHLOROPLASTIC-RELATED"/>
    <property type="match status" value="1"/>
</dbReference>
<dbReference type="PANTHER" id="PTHR33515:SF1">
    <property type="entry name" value="RIBOSOME-BINDING FACTOR A, CHLOROPLASTIC-RELATED"/>
    <property type="match status" value="1"/>
</dbReference>
<dbReference type="Pfam" id="PF02033">
    <property type="entry name" value="RBFA"/>
    <property type="match status" value="1"/>
</dbReference>
<dbReference type="SUPFAM" id="SSF89919">
    <property type="entry name" value="Ribosome-binding factor A, RbfA"/>
    <property type="match status" value="1"/>
</dbReference>
<dbReference type="PROSITE" id="PS01319">
    <property type="entry name" value="RBFA"/>
    <property type="match status" value="1"/>
</dbReference>
<sequence length="157" mass="17561">MAGTNPRAARIAALIQRVVASSIERELHDKRLASITVTEVRVTNDLQIAKVYWTQLGHEGHEEGERKRAQQALDQAKGHLRSLVGHKAGLRLTPQLQFVFDEVPGEAHEIEDILAVAKKRDEELARARATAQYAGDADPYKHDDEPSDDFEDDSDEE</sequence>
<feature type="chain" id="PRO_0000102625" description="Ribosome-binding factor A">
    <location>
        <begin position="1"/>
        <end position="157"/>
    </location>
</feature>
<feature type="region of interest" description="Disordered" evidence="2">
    <location>
        <begin position="126"/>
        <end position="157"/>
    </location>
</feature>
<feature type="compositionally biased region" description="Acidic residues" evidence="2">
    <location>
        <begin position="145"/>
        <end position="157"/>
    </location>
</feature>
<organism>
    <name type="scientific">Bifidobacterium longum (strain NCC 2705)</name>
    <dbReference type="NCBI Taxonomy" id="206672"/>
    <lineage>
        <taxon>Bacteria</taxon>
        <taxon>Bacillati</taxon>
        <taxon>Actinomycetota</taxon>
        <taxon>Actinomycetes</taxon>
        <taxon>Bifidobacteriales</taxon>
        <taxon>Bifidobacteriaceae</taxon>
        <taxon>Bifidobacterium</taxon>
    </lineage>
</organism>